<keyword id="KW-0687">Ribonucleoprotein</keyword>
<keyword id="KW-0689">Ribosomal protein</keyword>
<evidence type="ECO:0000255" key="1">
    <source>
        <dbReference type="HAMAP-Rule" id="MF_00374"/>
    </source>
</evidence>
<evidence type="ECO:0000305" key="2"/>
<gene>
    <name evidence="1" type="primary">rpmC</name>
    <name type="ordered locus">Cpar_0185</name>
</gene>
<reference key="1">
    <citation type="submission" date="2008-06" db="EMBL/GenBank/DDBJ databases">
        <title>Complete sequence of Chlorobaculum parvum NCIB 8327.</title>
        <authorList>
            <consortium name="US DOE Joint Genome Institute"/>
            <person name="Lucas S."/>
            <person name="Copeland A."/>
            <person name="Lapidus A."/>
            <person name="Glavina del Rio T."/>
            <person name="Dalin E."/>
            <person name="Tice H."/>
            <person name="Bruce D."/>
            <person name="Goodwin L."/>
            <person name="Pitluck S."/>
            <person name="Schmutz J."/>
            <person name="Larimer F."/>
            <person name="Land M."/>
            <person name="Hauser L."/>
            <person name="Kyrpides N."/>
            <person name="Mikhailova N."/>
            <person name="Zhao F."/>
            <person name="Li T."/>
            <person name="Liu Z."/>
            <person name="Overmann J."/>
            <person name="Bryant D.A."/>
            <person name="Richardson P."/>
        </authorList>
    </citation>
    <scope>NUCLEOTIDE SEQUENCE [LARGE SCALE GENOMIC DNA]</scope>
    <source>
        <strain>DSM 263 / NCIMB 8327</strain>
    </source>
</reference>
<name>RL29_CHLP8</name>
<accession>B3QR88</accession>
<organism>
    <name type="scientific">Chlorobaculum parvum (strain DSM 263 / NCIMB 8327)</name>
    <name type="common">Chlorobium vibrioforme subsp. thiosulfatophilum</name>
    <dbReference type="NCBI Taxonomy" id="517417"/>
    <lineage>
        <taxon>Bacteria</taxon>
        <taxon>Pseudomonadati</taxon>
        <taxon>Chlorobiota</taxon>
        <taxon>Chlorobiia</taxon>
        <taxon>Chlorobiales</taxon>
        <taxon>Chlorobiaceae</taxon>
        <taxon>Chlorobaculum</taxon>
    </lineage>
</organism>
<proteinExistence type="inferred from homology"/>
<comment type="similarity">
    <text evidence="1">Belongs to the universal ribosomal protein uL29 family.</text>
</comment>
<sequence>MKNYEIAAMSRKELLEKIDELENRLADINFHKAIEPPQNPMVFRNSKRDIARMKTRLRQMELQESSNA</sequence>
<feature type="chain" id="PRO_1000121744" description="Large ribosomal subunit protein uL29">
    <location>
        <begin position="1"/>
        <end position="68"/>
    </location>
</feature>
<dbReference type="EMBL" id="CP001099">
    <property type="protein sequence ID" value="ACF10612.1"/>
    <property type="molecule type" value="Genomic_DNA"/>
</dbReference>
<dbReference type="RefSeq" id="WP_012501447.1">
    <property type="nucleotide sequence ID" value="NC_011027.1"/>
</dbReference>
<dbReference type="SMR" id="B3QR88"/>
<dbReference type="STRING" id="517417.Cpar_0185"/>
<dbReference type="KEGG" id="cpc:Cpar_0185"/>
<dbReference type="eggNOG" id="COG0255">
    <property type="taxonomic scope" value="Bacteria"/>
</dbReference>
<dbReference type="HOGENOM" id="CLU_158491_5_1_10"/>
<dbReference type="OrthoDB" id="5296761at2"/>
<dbReference type="Proteomes" id="UP000008811">
    <property type="component" value="Chromosome"/>
</dbReference>
<dbReference type="GO" id="GO:1990904">
    <property type="term" value="C:ribonucleoprotein complex"/>
    <property type="evidence" value="ECO:0007669"/>
    <property type="project" value="UniProtKB-KW"/>
</dbReference>
<dbReference type="GO" id="GO:0005840">
    <property type="term" value="C:ribosome"/>
    <property type="evidence" value="ECO:0007669"/>
    <property type="project" value="UniProtKB-KW"/>
</dbReference>
<dbReference type="GO" id="GO:0003735">
    <property type="term" value="F:structural constituent of ribosome"/>
    <property type="evidence" value="ECO:0007669"/>
    <property type="project" value="InterPro"/>
</dbReference>
<dbReference type="GO" id="GO:0006412">
    <property type="term" value="P:translation"/>
    <property type="evidence" value="ECO:0007669"/>
    <property type="project" value="UniProtKB-UniRule"/>
</dbReference>
<dbReference type="CDD" id="cd00427">
    <property type="entry name" value="Ribosomal_L29_HIP"/>
    <property type="match status" value="1"/>
</dbReference>
<dbReference type="Gene3D" id="1.10.287.310">
    <property type="match status" value="1"/>
</dbReference>
<dbReference type="HAMAP" id="MF_00374">
    <property type="entry name" value="Ribosomal_uL29"/>
    <property type="match status" value="1"/>
</dbReference>
<dbReference type="InterPro" id="IPR001854">
    <property type="entry name" value="Ribosomal_uL29"/>
</dbReference>
<dbReference type="InterPro" id="IPR018254">
    <property type="entry name" value="Ribosomal_uL29_CS"/>
</dbReference>
<dbReference type="InterPro" id="IPR036049">
    <property type="entry name" value="Ribosomal_uL29_sf"/>
</dbReference>
<dbReference type="NCBIfam" id="TIGR00012">
    <property type="entry name" value="L29"/>
    <property type="match status" value="1"/>
</dbReference>
<dbReference type="Pfam" id="PF00831">
    <property type="entry name" value="Ribosomal_L29"/>
    <property type="match status" value="1"/>
</dbReference>
<dbReference type="SUPFAM" id="SSF46561">
    <property type="entry name" value="Ribosomal protein L29 (L29p)"/>
    <property type="match status" value="1"/>
</dbReference>
<dbReference type="PROSITE" id="PS00579">
    <property type="entry name" value="RIBOSOMAL_L29"/>
    <property type="match status" value="1"/>
</dbReference>
<protein>
    <recommendedName>
        <fullName evidence="1">Large ribosomal subunit protein uL29</fullName>
    </recommendedName>
    <alternativeName>
        <fullName evidence="2">50S ribosomal protein L29</fullName>
    </alternativeName>
</protein>